<proteinExistence type="inferred from homology"/>
<sequence>MTITGIIAEFNPFHNGHKYLLDQAEGLKIVAMSGNFMQRGEPAIVDKWTRAQMALENGADLVVELPFLVSVQAADFFGQGSVDILDRLGIDSLAFGTEEVLDYQKIADLYTEKGAEMEKFVKNLPDSLSYPQKTQAMWKEFAGLDFSGNTPNHVLALAYAKAVAGRNIKLHPIQRQGAGYHSVNKDVDFASATALRQHQKDQDFLERFMPSVALFEQASKVIWEDYFPLLRYQILSNPDLTTIYQVNQEMAVRIKEAIKTAQSVEELVELVTTKRYTKARVRRLLTYILMQARESDLPEAIHVLGFTEKGRQHLKSLKGQVSLVSRIGKEPWDAMTQKVDQIYQLGKPSIAEQNFGRVPIRIETN</sequence>
<keyword id="KW-0067">ATP-binding</keyword>
<keyword id="KW-0963">Cytoplasm</keyword>
<keyword id="KW-0436">Ligase</keyword>
<keyword id="KW-0547">Nucleotide-binding</keyword>
<keyword id="KW-1185">Reference proteome</keyword>
<keyword id="KW-0694">RNA-binding</keyword>
<keyword id="KW-0819">tRNA processing</keyword>
<keyword id="KW-0820">tRNA-binding</keyword>
<protein>
    <recommendedName>
        <fullName evidence="1">tRNA(Met) cytidine acetate ligase</fullName>
        <ecNumber evidence="1">6.3.4.-</ecNumber>
    </recommendedName>
</protein>
<evidence type="ECO:0000255" key="1">
    <source>
        <dbReference type="HAMAP-Rule" id="MF_01539"/>
    </source>
</evidence>
<name>TMCAL_STRR6</name>
<dbReference type="EC" id="6.3.4.-" evidence="1"/>
<dbReference type="EMBL" id="AE007317">
    <property type="protein sequence ID" value="AAL00390.1"/>
    <property type="molecule type" value="Genomic_DNA"/>
</dbReference>
<dbReference type="PIR" id="A98070">
    <property type="entry name" value="A98070"/>
</dbReference>
<dbReference type="RefSeq" id="NP_359179.1">
    <property type="nucleotide sequence ID" value="NC_003098.1"/>
</dbReference>
<dbReference type="RefSeq" id="WP_000156355.1">
    <property type="nucleotide sequence ID" value="NC_003098.1"/>
</dbReference>
<dbReference type="SMR" id="Q8DNR1"/>
<dbReference type="STRING" id="171101.spr1587"/>
<dbReference type="KEGG" id="spr:spr1587"/>
<dbReference type="PATRIC" id="fig|171101.6.peg.1714"/>
<dbReference type="eggNOG" id="COG1323">
    <property type="taxonomic scope" value="Bacteria"/>
</dbReference>
<dbReference type="HOGENOM" id="CLU_038915_0_2_9"/>
<dbReference type="Proteomes" id="UP000000586">
    <property type="component" value="Chromosome"/>
</dbReference>
<dbReference type="GO" id="GO:0005737">
    <property type="term" value="C:cytoplasm"/>
    <property type="evidence" value="ECO:0007669"/>
    <property type="project" value="UniProtKB-SubCell"/>
</dbReference>
<dbReference type="GO" id="GO:0005524">
    <property type="term" value="F:ATP binding"/>
    <property type="evidence" value="ECO:0007669"/>
    <property type="project" value="UniProtKB-KW"/>
</dbReference>
<dbReference type="GO" id="GO:0016879">
    <property type="term" value="F:ligase activity, forming carbon-nitrogen bonds"/>
    <property type="evidence" value="ECO:0007669"/>
    <property type="project" value="UniProtKB-UniRule"/>
</dbReference>
<dbReference type="GO" id="GO:0000049">
    <property type="term" value="F:tRNA binding"/>
    <property type="evidence" value="ECO:0007669"/>
    <property type="project" value="UniProtKB-KW"/>
</dbReference>
<dbReference type="GO" id="GO:0006400">
    <property type="term" value="P:tRNA modification"/>
    <property type="evidence" value="ECO:0007669"/>
    <property type="project" value="UniProtKB-UniRule"/>
</dbReference>
<dbReference type="Gene3D" id="3.40.50.620">
    <property type="entry name" value="HUPs"/>
    <property type="match status" value="1"/>
</dbReference>
<dbReference type="HAMAP" id="MF_01539">
    <property type="entry name" value="TmcAL"/>
    <property type="match status" value="1"/>
</dbReference>
<dbReference type="InterPro" id="IPR014729">
    <property type="entry name" value="Rossmann-like_a/b/a_fold"/>
</dbReference>
<dbReference type="InterPro" id="IPR008513">
    <property type="entry name" value="tRNA(Met)_cyd_acetate_ligase"/>
</dbReference>
<dbReference type="NCBIfam" id="NF010191">
    <property type="entry name" value="PRK13670.1"/>
    <property type="match status" value="1"/>
</dbReference>
<dbReference type="PANTHER" id="PTHR37825">
    <property type="entry name" value="TRNA(MET) CYTIDINE ACETATE LIGASE"/>
    <property type="match status" value="1"/>
</dbReference>
<dbReference type="PANTHER" id="PTHR37825:SF1">
    <property type="entry name" value="TRNA(MET) CYTIDINE ACETATE LIGASE"/>
    <property type="match status" value="1"/>
</dbReference>
<dbReference type="Pfam" id="PF05636">
    <property type="entry name" value="HIGH_NTase1"/>
    <property type="match status" value="1"/>
</dbReference>
<dbReference type="SUPFAM" id="SSF52374">
    <property type="entry name" value="Nucleotidylyl transferase"/>
    <property type="match status" value="1"/>
</dbReference>
<gene>
    <name evidence="1" type="primary">tmcAL</name>
    <name type="ordered locus">spr1587</name>
</gene>
<feature type="chain" id="PRO_0000147190" description="tRNA(Met) cytidine acetate ligase">
    <location>
        <begin position="1"/>
        <end position="365"/>
    </location>
</feature>
<feature type="binding site" evidence="1">
    <location>
        <begin position="7"/>
        <end position="20"/>
    </location>
    <ligand>
        <name>ATP</name>
        <dbReference type="ChEBI" id="CHEBI:30616"/>
    </ligand>
</feature>
<feature type="binding site" evidence="1">
    <location>
        <position position="96"/>
    </location>
    <ligand>
        <name>ATP</name>
        <dbReference type="ChEBI" id="CHEBI:30616"/>
    </ligand>
</feature>
<feature type="binding site" evidence="1">
    <location>
        <position position="152"/>
    </location>
    <ligand>
        <name>ATP</name>
        <dbReference type="ChEBI" id="CHEBI:30616"/>
    </ligand>
</feature>
<feature type="binding site" evidence="1">
    <location>
        <position position="175"/>
    </location>
    <ligand>
        <name>ATP</name>
        <dbReference type="ChEBI" id="CHEBI:30616"/>
    </ligand>
</feature>
<reference key="1">
    <citation type="journal article" date="2001" name="J. Bacteriol.">
        <title>Genome of the bacterium Streptococcus pneumoniae strain R6.</title>
        <authorList>
            <person name="Hoskins J."/>
            <person name="Alborn W.E. Jr."/>
            <person name="Arnold J."/>
            <person name="Blaszczak L.C."/>
            <person name="Burgett S."/>
            <person name="DeHoff B.S."/>
            <person name="Estrem S.T."/>
            <person name="Fritz L."/>
            <person name="Fu D.-J."/>
            <person name="Fuller W."/>
            <person name="Geringer C."/>
            <person name="Gilmour R."/>
            <person name="Glass J.S."/>
            <person name="Khoja H."/>
            <person name="Kraft A.R."/>
            <person name="Lagace R.E."/>
            <person name="LeBlanc D.J."/>
            <person name="Lee L.N."/>
            <person name="Lefkowitz E.J."/>
            <person name="Lu J."/>
            <person name="Matsushima P."/>
            <person name="McAhren S.M."/>
            <person name="McHenney M."/>
            <person name="McLeaster K."/>
            <person name="Mundy C.W."/>
            <person name="Nicas T.I."/>
            <person name="Norris F.H."/>
            <person name="O'Gara M."/>
            <person name="Peery R.B."/>
            <person name="Robertson G.T."/>
            <person name="Rockey P."/>
            <person name="Sun P.-M."/>
            <person name="Winkler M.E."/>
            <person name="Yang Y."/>
            <person name="Young-Bellido M."/>
            <person name="Zhao G."/>
            <person name="Zook C.A."/>
            <person name="Baltz R.H."/>
            <person name="Jaskunas S.R."/>
            <person name="Rosteck P.R. Jr."/>
            <person name="Skatrud P.L."/>
            <person name="Glass J.I."/>
        </authorList>
    </citation>
    <scope>NUCLEOTIDE SEQUENCE [LARGE SCALE GENOMIC DNA]</scope>
    <source>
        <strain>ATCC BAA-255 / R6</strain>
    </source>
</reference>
<accession>Q8DNR1</accession>
<organism>
    <name type="scientific">Streptococcus pneumoniae (strain ATCC BAA-255 / R6)</name>
    <dbReference type="NCBI Taxonomy" id="171101"/>
    <lineage>
        <taxon>Bacteria</taxon>
        <taxon>Bacillati</taxon>
        <taxon>Bacillota</taxon>
        <taxon>Bacilli</taxon>
        <taxon>Lactobacillales</taxon>
        <taxon>Streptococcaceae</taxon>
        <taxon>Streptococcus</taxon>
    </lineage>
</organism>
<comment type="function">
    <text evidence="1">Catalyzes the formation of N(4)-acetylcytidine (ac(4)C) at the wobble position of elongator tRNA(Met), using acetate and ATP as substrates. First activates an acetate ion to form acetyladenylate (Ac-AMP) and then transfers the acetyl group to tRNA to form ac(4)C34.</text>
</comment>
<comment type="catalytic activity">
    <reaction evidence="1">
        <text>cytidine(34) in elongator tRNA(Met) + acetate + ATP = N(4)-acetylcytidine(34) in elongator tRNA(Met) + AMP + diphosphate</text>
        <dbReference type="Rhea" id="RHEA:58144"/>
        <dbReference type="Rhea" id="RHEA-COMP:10693"/>
        <dbReference type="Rhea" id="RHEA-COMP:10694"/>
        <dbReference type="ChEBI" id="CHEBI:30089"/>
        <dbReference type="ChEBI" id="CHEBI:30616"/>
        <dbReference type="ChEBI" id="CHEBI:33019"/>
        <dbReference type="ChEBI" id="CHEBI:74900"/>
        <dbReference type="ChEBI" id="CHEBI:82748"/>
        <dbReference type="ChEBI" id="CHEBI:456215"/>
    </reaction>
</comment>
<comment type="subcellular location">
    <subcellularLocation>
        <location evidence="1">Cytoplasm</location>
    </subcellularLocation>
</comment>
<comment type="similarity">
    <text evidence="1">Belongs to the TmcAL family.</text>
</comment>